<name>HEM1_HALS3</name>
<organism>
    <name type="scientific">Halobacterium salinarum (strain ATCC 29341 / DSM 671 / R1)</name>
    <dbReference type="NCBI Taxonomy" id="478009"/>
    <lineage>
        <taxon>Archaea</taxon>
        <taxon>Methanobacteriati</taxon>
        <taxon>Methanobacteriota</taxon>
        <taxon>Stenosarchaea group</taxon>
        <taxon>Halobacteria</taxon>
        <taxon>Halobacteriales</taxon>
        <taxon>Halobacteriaceae</taxon>
        <taxon>Halobacterium</taxon>
        <taxon>Halobacterium salinarum NRC-34001</taxon>
    </lineage>
</organism>
<comment type="function">
    <text evidence="1">Catalyzes the NADPH-dependent reduction of glutamyl-tRNA(Glu) to glutamate 1-semialdehyde (GSA).</text>
</comment>
<comment type="catalytic activity">
    <reaction evidence="1">
        <text>(S)-4-amino-5-oxopentanoate + tRNA(Glu) + NADP(+) = L-glutamyl-tRNA(Glu) + NADPH + H(+)</text>
        <dbReference type="Rhea" id="RHEA:12344"/>
        <dbReference type="Rhea" id="RHEA-COMP:9663"/>
        <dbReference type="Rhea" id="RHEA-COMP:9680"/>
        <dbReference type="ChEBI" id="CHEBI:15378"/>
        <dbReference type="ChEBI" id="CHEBI:57501"/>
        <dbReference type="ChEBI" id="CHEBI:57783"/>
        <dbReference type="ChEBI" id="CHEBI:58349"/>
        <dbReference type="ChEBI" id="CHEBI:78442"/>
        <dbReference type="ChEBI" id="CHEBI:78520"/>
        <dbReference type="EC" id="1.2.1.70"/>
    </reaction>
</comment>
<comment type="pathway">
    <text evidence="1">Porphyrin-containing compound metabolism; protoporphyrin-IX biosynthesis; 5-aminolevulinate from L-glutamyl-tRNA(Glu): step 1/2.</text>
</comment>
<comment type="subunit">
    <text evidence="1">Homodimer.</text>
</comment>
<comment type="domain">
    <text evidence="1">Possesses an unusual extended V-shaped dimeric structure with each monomer consisting of three distinct domains arranged along a curved 'spinal' alpha-helix. The N-terminal catalytic domain specifically recognizes the glutamate moiety of the substrate. The second domain is the NADPH-binding domain, and the third C-terminal domain is responsible for dimerization.</text>
</comment>
<comment type="miscellaneous">
    <text evidence="1">During catalysis, the active site Cys acts as a nucleophile attacking the alpha-carbonyl group of tRNA-bound glutamate with the formation of a thioester intermediate between enzyme and glutamate, and the concomitant release of tRNA(Glu). The thioester intermediate is finally reduced by direct hydride transfer from NADPH, to form the product GSA.</text>
</comment>
<comment type="similarity">
    <text evidence="1">Belongs to the glutamyl-tRNA reductase family.</text>
</comment>
<sequence length="436" mass="45450">MNGNTGVVSGVRVSHETASLDELAAASAASTEAALDALLEQPPVEEAFVLQTCHRVEAYVVTADQASGRRALGGAGFNPAGGGAISMGHEDSLRHLLRVAAGLESLVVGEDQILGQLRDAYDAAKDAGGIDHVLREAVTKAMHVGERARTETAINEGATSLGTAAVRLAERKTQLADARAVVVGAGEMGALAAKAFASATVAEIVIANRTPARAVRVADMVSVPAEATTLADARGRLDAADVVVTATGSPEHVLPASAFADAGDTVVVDLAQPRDVAPGAGGHDGVAVHDLDDLEAVTAATRERREDAAREVEAMIETEFERLLTQYKRKRADEVIARMYESADRLKSREVQTAVHRLEAESGSLSADEREVVESMADALVSQLLAAPTKSLRDAAAEDDWSTIATALELFNPEFEDGMPFDASRGGDAASAESED</sequence>
<feature type="chain" id="PRO_1000093142" description="Glutamyl-tRNA reductase">
    <location>
        <begin position="1"/>
        <end position="436"/>
    </location>
</feature>
<feature type="active site" description="Nucleophile" evidence="1">
    <location>
        <position position="53"/>
    </location>
</feature>
<feature type="binding site" evidence="1">
    <location>
        <begin position="52"/>
        <end position="55"/>
    </location>
    <ligand>
        <name>substrate</name>
    </ligand>
</feature>
<feature type="binding site" evidence="1">
    <location>
        <position position="105"/>
    </location>
    <ligand>
        <name>substrate</name>
    </ligand>
</feature>
<feature type="binding site" evidence="1">
    <location>
        <begin position="110"/>
        <end position="112"/>
    </location>
    <ligand>
        <name>substrate</name>
    </ligand>
</feature>
<feature type="binding site" evidence="1">
    <location>
        <position position="116"/>
    </location>
    <ligand>
        <name>substrate</name>
    </ligand>
</feature>
<feature type="binding site" evidence="1">
    <location>
        <begin position="184"/>
        <end position="189"/>
    </location>
    <ligand>
        <name>NADP(+)</name>
        <dbReference type="ChEBI" id="CHEBI:58349"/>
    </ligand>
</feature>
<feature type="site" description="Important for activity" evidence="1">
    <location>
        <position position="95"/>
    </location>
</feature>
<evidence type="ECO:0000255" key="1">
    <source>
        <dbReference type="HAMAP-Rule" id="MF_00087"/>
    </source>
</evidence>
<keyword id="KW-0521">NADP</keyword>
<keyword id="KW-0560">Oxidoreductase</keyword>
<keyword id="KW-0627">Porphyrin biosynthesis</keyword>
<dbReference type="EC" id="1.2.1.70" evidence="1"/>
<dbReference type="EMBL" id="AM774415">
    <property type="protein sequence ID" value="CAP14289.1"/>
    <property type="molecule type" value="Genomic_DNA"/>
</dbReference>
<dbReference type="RefSeq" id="WP_010903296.1">
    <property type="nucleotide sequence ID" value="NC_010364.1"/>
</dbReference>
<dbReference type="SMR" id="B0R6C0"/>
<dbReference type="EnsemblBacteria" id="CAP14289">
    <property type="protein sequence ID" value="CAP14289"/>
    <property type="gene ID" value="OE_3496R"/>
</dbReference>
<dbReference type="GeneID" id="89350006"/>
<dbReference type="KEGG" id="hsl:OE_3496R"/>
<dbReference type="HOGENOM" id="CLU_035113_0_1_2"/>
<dbReference type="PhylomeDB" id="B0R6C0"/>
<dbReference type="UniPathway" id="UPA00251">
    <property type="reaction ID" value="UER00316"/>
</dbReference>
<dbReference type="Proteomes" id="UP000001321">
    <property type="component" value="Chromosome"/>
</dbReference>
<dbReference type="GO" id="GO:0008883">
    <property type="term" value="F:glutamyl-tRNA reductase activity"/>
    <property type="evidence" value="ECO:0007669"/>
    <property type="project" value="UniProtKB-UniRule"/>
</dbReference>
<dbReference type="GO" id="GO:0050661">
    <property type="term" value="F:NADP binding"/>
    <property type="evidence" value="ECO:0007669"/>
    <property type="project" value="InterPro"/>
</dbReference>
<dbReference type="GO" id="GO:0019353">
    <property type="term" value="P:protoporphyrinogen IX biosynthetic process from glutamate"/>
    <property type="evidence" value="ECO:0007669"/>
    <property type="project" value="TreeGrafter"/>
</dbReference>
<dbReference type="CDD" id="cd05213">
    <property type="entry name" value="NAD_bind_Glutamyl_tRNA_reduct"/>
    <property type="match status" value="1"/>
</dbReference>
<dbReference type="FunFam" id="3.30.460.30:FF:000001">
    <property type="entry name" value="Glutamyl-tRNA reductase"/>
    <property type="match status" value="1"/>
</dbReference>
<dbReference type="Gene3D" id="3.30.460.30">
    <property type="entry name" value="Glutamyl-tRNA reductase, N-terminal domain"/>
    <property type="match status" value="1"/>
</dbReference>
<dbReference type="Gene3D" id="3.40.50.720">
    <property type="entry name" value="NAD(P)-binding Rossmann-like Domain"/>
    <property type="match status" value="1"/>
</dbReference>
<dbReference type="HAMAP" id="MF_00087">
    <property type="entry name" value="Glu_tRNA_reductase"/>
    <property type="match status" value="1"/>
</dbReference>
<dbReference type="InterPro" id="IPR000343">
    <property type="entry name" value="4pyrrol_synth_GluRdtase"/>
</dbReference>
<dbReference type="InterPro" id="IPR015896">
    <property type="entry name" value="4pyrrol_synth_GluRdtase_dimer"/>
</dbReference>
<dbReference type="InterPro" id="IPR015895">
    <property type="entry name" value="4pyrrol_synth_GluRdtase_N"/>
</dbReference>
<dbReference type="InterPro" id="IPR018214">
    <property type="entry name" value="GluRdtase_CS"/>
</dbReference>
<dbReference type="InterPro" id="IPR036453">
    <property type="entry name" value="GluRdtase_dimer_dom_sf"/>
</dbReference>
<dbReference type="InterPro" id="IPR036343">
    <property type="entry name" value="GluRdtase_N_sf"/>
</dbReference>
<dbReference type="InterPro" id="IPR036291">
    <property type="entry name" value="NAD(P)-bd_dom_sf"/>
</dbReference>
<dbReference type="InterPro" id="IPR006151">
    <property type="entry name" value="Shikm_DH/Glu-tRNA_Rdtase"/>
</dbReference>
<dbReference type="NCBIfam" id="TIGR01035">
    <property type="entry name" value="hemA"/>
    <property type="match status" value="1"/>
</dbReference>
<dbReference type="PANTHER" id="PTHR43013">
    <property type="entry name" value="GLUTAMYL-TRNA REDUCTASE"/>
    <property type="match status" value="1"/>
</dbReference>
<dbReference type="PANTHER" id="PTHR43013:SF1">
    <property type="entry name" value="GLUTAMYL-TRNA REDUCTASE"/>
    <property type="match status" value="1"/>
</dbReference>
<dbReference type="Pfam" id="PF00745">
    <property type="entry name" value="GlutR_dimer"/>
    <property type="match status" value="1"/>
</dbReference>
<dbReference type="Pfam" id="PF05201">
    <property type="entry name" value="GlutR_N"/>
    <property type="match status" value="1"/>
</dbReference>
<dbReference type="Pfam" id="PF01488">
    <property type="entry name" value="Shikimate_DH"/>
    <property type="match status" value="1"/>
</dbReference>
<dbReference type="PIRSF" id="PIRSF000445">
    <property type="entry name" value="4pyrrol_synth_GluRdtase"/>
    <property type="match status" value="1"/>
</dbReference>
<dbReference type="SUPFAM" id="SSF69742">
    <property type="entry name" value="Glutamyl tRNA-reductase catalytic, N-terminal domain"/>
    <property type="match status" value="1"/>
</dbReference>
<dbReference type="SUPFAM" id="SSF69075">
    <property type="entry name" value="Glutamyl tRNA-reductase dimerization domain"/>
    <property type="match status" value="1"/>
</dbReference>
<dbReference type="SUPFAM" id="SSF51735">
    <property type="entry name" value="NAD(P)-binding Rossmann-fold domains"/>
    <property type="match status" value="1"/>
</dbReference>
<dbReference type="PROSITE" id="PS00747">
    <property type="entry name" value="GLUTR"/>
    <property type="match status" value="1"/>
</dbReference>
<proteinExistence type="inferred from homology"/>
<reference key="1">
    <citation type="journal article" date="2008" name="Genomics">
        <title>Evolution in the laboratory: the genome of Halobacterium salinarum strain R1 compared to that of strain NRC-1.</title>
        <authorList>
            <person name="Pfeiffer F."/>
            <person name="Schuster S.C."/>
            <person name="Broicher A."/>
            <person name="Falb M."/>
            <person name="Palm P."/>
            <person name="Rodewald K."/>
            <person name="Ruepp A."/>
            <person name="Soppa J."/>
            <person name="Tittor J."/>
            <person name="Oesterhelt D."/>
        </authorList>
    </citation>
    <scope>NUCLEOTIDE SEQUENCE [LARGE SCALE GENOMIC DNA]</scope>
    <source>
        <strain>ATCC 29341 / DSM 671 / R1</strain>
    </source>
</reference>
<accession>B0R6C0</accession>
<gene>
    <name evidence="1" type="primary">hemA</name>
    <name type="ordered locus">OE_3496R</name>
</gene>
<protein>
    <recommendedName>
        <fullName evidence="1">Glutamyl-tRNA reductase</fullName>
        <shortName evidence="1">GluTR</shortName>
        <ecNumber evidence="1">1.2.1.70</ecNumber>
    </recommendedName>
</protein>